<comment type="function">
    <text evidence="1">Catalyzes the reductive methylation of 2'-deoxyuridine-5'-monophosphate (dUMP) to 2'-deoxythymidine-5'-monophosphate (dTMP) while utilizing 5,10-methylenetetrahydrofolate (mTHF) as the methyl donor and reductant in the reaction, yielding dihydrofolate (DHF) as a by-product. This enzymatic reaction provides an intracellular de novo source of dTMP, an essential precursor for DNA biosynthesis.</text>
</comment>
<comment type="catalytic activity">
    <reaction evidence="1">
        <text>dUMP + (6R)-5,10-methylene-5,6,7,8-tetrahydrofolate = 7,8-dihydrofolate + dTMP</text>
        <dbReference type="Rhea" id="RHEA:12104"/>
        <dbReference type="ChEBI" id="CHEBI:15636"/>
        <dbReference type="ChEBI" id="CHEBI:57451"/>
        <dbReference type="ChEBI" id="CHEBI:63528"/>
        <dbReference type="ChEBI" id="CHEBI:246422"/>
        <dbReference type="EC" id="2.1.1.45"/>
    </reaction>
</comment>
<comment type="pathway">
    <text evidence="1">Pyrimidine metabolism; dTTP biosynthesis.</text>
</comment>
<comment type="subunit">
    <text evidence="1">Homodimer.</text>
</comment>
<comment type="subcellular location">
    <subcellularLocation>
        <location evidence="1">Cytoplasm</location>
    </subcellularLocation>
</comment>
<comment type="similarity">
    <text evidence="1">Belongs to the thymidylate synthase family. Bacterial-type ThyA subfamily.</text>
</comment>
<sequence>MNIEIQYLELCREILAENEQEIAEGRWTPNRTGMGTVGVFGRMLKHDFKEGFPALTTKKLFFNSVKAELLWFLAGRTDLEFLHERGCHIWDKDAARNGGKLGPIYGKQWRAWEGADGRTYDQIAWVIQQIREIAADPERPHPNSRRLVVSPWNVADLEEMALPPCHGPFQFHVKDGRLHLAVWQRSADLFLGVPFNIASYSLLLHMVAQVTGLAVGTYTHYLNDVHIYRNLLDQVRLQLTREPYPLPRLWLNPEVREIDQFTMDDIQLVDYKHHPPIRGELST</sequence>
<evidence type="ECO:0000255" key="1">
    <source>
        <dbReference type="HAMAP-Rule" id="MF_00008"/>
    </source>
</evidence>
<dbReference type="EC" id="2.1.1.45" evidence="1"/>
<dbReference type="EMBL" id="AP006840">
    <property type="protein sequence ID" value="BAD42099.1"/>
    <property type="molecule type" value="Genomic_DNA"/>
</dbReference>
<dbReference type="RefSeq" id="WP_011197231.1">
    <property type="nucleotide sequence ID" value="NC_006177.1"/>
</dbReference>
<dbReference type="SMR" id="Q67JQ1"/>
<dbReference type="STRING" id="292459.STH3117"/>
<dbReference type="KEGG" id="sth:STH3117"/>
<dbReference type="eggNOG" id="COG0207">
    <property type="taxonomic scope" value="Bacteria"/>
</dbReference>
<dbReference type="HOGENOM" id="CLU_021669_0_0_9"/>
<dbReference type="OrthoDB" id="9774633at2"/>
<dbReference type="UniPathway" id="UPA00575"/>
<dbReference type="Proteomes" id="UP000000417">
    <property type="component" value="Chromosome"/>
</dbReference>
<dbReference type="GO" id="GO:0005829">
    <property type="term" value="C:cytosol"/>
    <property type="evidence" value="ECO:0007669"/>
    <property type="project" value="TreeGrafter"/>
</dbReference>
<dbReference type="GO" id="GO:0004799">
    <property type="term" value="F:thymidylate synthase activity"/>
    <property type="evidence" value="ECO:0007669"/>
    <property type="project" value="UniProtKB-UniRule"/>
</dbReference>
<dbReference type="GO" id="GO:0006231">
    <property type="term" value="P:dTMP biosynthetic process"/>
    <property type="evidence" value="ECO:0007669"/>
    <property type="project" value="UniProtKB-UniRule"/>
</dbReference>
<dbReference type="GO" id="GO:0006235">
    <property type="term" value="P:dTTP biosynthetic process"/>
    <property type="evidence" value="ECO:0007669"/>
    <property type="project" value="UniProtKB-UniRule"/>
</dbReference>
<dbReference type="GO" id="GO:0032259">
    <property type="term" value="P:methylation"/>
    <property type="evidence" value="ECO:0007669"/>
    <property type="project" value="UniProtKB-KW"/>
</dbReference>
<dbReference type="CDD" id="cd00351">
    <property type="entry name" value="TS_Pyrimidine_HMase"/>
    <property type="match status" value="1"/>
</dbReference>
<dbReference type="Gene3D" id="3.30.572.10">
    <property type="entry name" value="Thymidylate synthase/dCMP hydroxymethylase domain"/>
    <property type="match status" value="1"/>
</dbReference>
<dbReference type="HAMAP" id="MF_00008">
    <property type="entry name" value="Thymidy_synth_bact"/>
    <property type="match status" value="1"/>
</dbReference>
<dbReference type="InterPro" id="IPR045097">
    <property type="entry name" value="Thymidate_synth/dCMP_Mease"/>
</dbReference>
<dbReference type="InterPro" id="IPR023451">
    <property type="entry name" value="Thymidate_synth/dCMP_Mease_dom"/>
</dbReference>
<dbReference type="InterPro" id="IPR036926">
    <property type="entry name" value="Thymidate_synth/dCMP_Mease_sf"/>
</dbReference>
<dbReference type="InterPro" id="IPR000398">
    <property type="entry name" value="Thymidylate_synthase"/>
</dbReference>
<dbReference type="InterPro" id="IPR020940">
    <property type="entry name" value="Thymidylate_synthase_AS"/>
</dbReference>
<dbReference type="NCBIfam" id="NF002497">
    <property type="entry name" value="PRK01827.1-3"/>
    <property type="match status" value="1"/>
</dbReference>
<dbReference type="NCBIfam" id="TIGR03284">
    <property type="entry name" value="thym_sym"/>
    <property type="match status" value="1"/>
</dbReference>
<dbReference type="PANTHER" id="PTHR11548:SF9">
    <property type="entry name" value="THYMIDYLATE SYNTHASE"/>
    <property type="match status" value="1"/>
</dbReference>
<dbReference type="PANTHER" id="PTHR11548">
    <property type="entry name" value="THYMIDYLATE SYNTHASE 1"/>
    <property type="match status" value="1"/>
</dbReference>
<dbReference type="Pfam" id="PF00303">
    <property type="entry name" value="Thymidylat_synt"/>
    <property type="match status" value="1"/>
</dbReference>
<dbReference type="PRINTS" id="PR00108">
    <property type="entry name" value="THYMDSNTHASE"/>
</dbReference>
<dbReference type="SUPFAM" id="SSF55831">
    <property type="entry name" value="Thymidylate synthase/dCMP hydroxymethylase"/>
    <property type="match status" value="1"/>
</dbReference>
<dbReference type="PROSITE" id="PS00091">
    <property type="entry name" value="THYMIDYLATE_SYNTHASE"/>
    <property type="match status" value="1"/>
</dbReference>
<keyword id="KW-0963">Cytoplasm</keyword>
<keyword id="KW-0489">Methyltransferase</keyword>
<keyword id="KW-0545">Nucleotide biosynthesis</keyword>
<keyword id="KW-1185">Reference proteome</keyword>
<keyword id="KW-0808">Transferase</keyword>
<protein>
    <recommendedName>
        <fullName evidence="1">Thymidylate synthase</fullName>
        <shortName evidence="1">TS</shortName>
        <shortName evidence="1">TSase</shortName>
        <ecNumber evidence="1">2.1.1.45</ecNumber>
    </recommendedName>
</protein>
<gene>
    <name evidence="1" type="primary">thyA</name>
    <name type="ordered locus">STH3117</name>
</gene>
<proteinExistence type="inferred from homology"/>
<organism>
    <name type="scientific">Symbiobacterium thermophilum (strain DSM 24528 / JCM 14929 / IAM 14863 / T)</name>
    <dbReference type="NCBI Taxonomy" id="292459"/>
    <lineage>
        <taxon>Bacteria</taxon>
        <taxon>Bacillati</taxon>
        <taxon>Bacillota</taxon>
        <taxon>Clostridia</taxon>
        <taxon>Eubacteriales</taxon>
        <taxon>Symbiobacteriaceae</taxon>
        <taxon>Symbiobacterium</taxon>
    </lineage>
</organism>
<name>TYSY_SYMTH</name>
<reference key="1">
    <citation type="journal article" date="2004" name="Nucleic Acids Res.">
        <title>Genome sequence of Symbiobacterium thermophilum, an uncultivable bacterium that depends on microbial commensalism.</title>
        <authorList>
            <person name="Ueda K."/>
            <person name="Yamashita A."/>
            <person name="Ishikawa J."/>
            <person name="Shimada M."/>
            <person name="Watsuji T."/>
            <person name="Morimura K."/>
            <person name="Ikeda H."/>
            <person name="Hattori M."/>
            <person name="Beppu T."/>
        </authorList>
    </citation>
    <scope>NUCLEOTIDE SEQUENCE [LARGE SCALE GENOMIC DNA]</scope>
    <source>
        <strain>DSM 24528 / JCM 14929 / IAM 14863 / T</strain>
    </source>
</reference>
<feature type="chain" id="PRO_0000141038" description="Thymidylate synthase">
    <location>
        <begin position="1"/>
        <end position="283"/>
    </location>
</feature>
<feature type="active site" description="Nucleophile" evidence="1">
    <location>
        <position position="165"/>
    </location>
</feature>
<feature type="binding site" description="in other chain" evidence="1">
    <location>
        <position position="31"/>
    </location>
    <ligand>
        <name>dUMP</name>
        <dbReference type="ChEBI" id="CHEBI:246422"/>
        <note>ligand shared between dimeric partners</note>
    </ligand>
</feature>
<feature type="binding site" evidence="1">
    <location>
        <begin position="145"/>
        <end position="146"/>
    </location>
    <ligand>
        <name>dUMP</name>
        <dbReference type="ChEBI" id="CHEBI:246422"/>
        <note>ligand shared between dimeric partners</note>
    </ligand>
</feature>
<feature type="binding site" description="in other chain" evidence="1">
    <location>
        <begin position="185"/>
        <end position="188"/>
    </location>
    <ligand>
        <name>dUMP</name>
        <dbReference type="ChEBI" id="CHEBI:246422"/>
        <note>ligand shared between dimeric partners</note>
    </ligand>
</feature>
<feature type="binding site" evidence="1">
    <location>
        <position position="188"/>
    </location>
    <ligand>
        <name>(6R)-5,10-methylene-5,6,7,8-tetrahydrofolate</name>
        <dbReference type="ChEBI" id="CHEBI:15636"/>
    </ligand>
</feature>
<feature type="binding site" description="in other chain" evidence="1">
    <location>
        <position position="196"/>
    </location>
    <ligand>
        <name>dUMP</name>
        <dbReference type="ChEBI" id="CHEBI:246422"/>
        <note>ligand shared between dimeric partners</note>
    </ligand>
</feature>
<feature type="binding site" description="in other chain" evidence="1">
    <location>
        <begin position="226"/>
        <end position="228"/>
    </location>
    <ligand>
        <name>dUMP</name>
        <dbReference type="ChEBI" id="CHEBI:246422"/>
        <note>ligand shared between dimeric partners</note>
    </ligand>
</feature>
<feature type="binding site" evidence="1">
    <location>
        <position position="282"/>
    </location>
    <ligand>
        <name>(6R)-5,10-methylene-5,6,7,8-tetrahydrofolate</name>
        <dbReference type="ChEBI" id="CHEBI:15636"/>
    </ligand>
</feature>
<accession>Q67JQ1</accession>